<comment type="similarity">
    <text evidence="3">Belongs to the GPATCH1 family.</text>
</comment>
<comment type="sequence caution" evidence="3">
    <conflict type="erroneous initiation">
        <sequence resource="EMBL-CDS" id="AAL28820"/>
    </conflict>
</comment>
<reference key="1">
    <citation type="journal article" date="2000" name="Science">
        <title>The genome sequence of Drosophila melanogaster.</title>
        <authorList>
            <person name="Adams M.D."/>
            <person name="Celniker S.E."/>
            <person name="Holt R.A."/>
            <person name="Evans C.A."/>
            <person name="Gocayne J.D."/>
            <person name="Amanatides P.G."/>
            <person name="Scherer S.E."/>
            <person name="Li P.W."/>
            <person name="Hoskins R.A."/>
            <person name="Galle R.F."/>
            <person name="George R.A."/>
            <person name="Lewis S.E."/>
            <person name="Richards S."/>
            <person name="Ashburner M."/>
            <person name="Henderson S.N."/>
            <person name="Sutton G.G."/>
            <person name="Wortman J.R."/>
            <person name="Yandell M.D."/>
            <person name="Zhang Q."/>
            <person name="Chen L.X."/>
            <person name="Brandon R.C."/>
            <person name="Rogers Y.-H.C."/>
            <person name="Blazej R.G."/>
            <person name="Champe M."/>
            <person name="Pfeiffer B.D."/>
            <person name="Wan K.H."/>
            <person name="Doyle C."/>
            <person name="Baxter E.G."/>
            <person name="Helt G."/>
            <person name="Nelson C.R."/>
            <person name="Miklos G.L.G."/>
            <person name="Abril J.F."/>
            <person name="Agbayani A."/>
            <person name="An H.-J."/>
            <person name="Andrews-Pfannkoch C."/>
            <person name="Baldwin D."/>
            <person name="Ballew R.M."/>
            <person name="Basu A."/>
            <person name="Baxendale J."/>
            <person name="Bayraktaroglu L."/>
            <person name="Beasley E.M."/>
            <person name="Beeson K.Y."/>
            <person name="Benos P.V."/>
            <person name="Berman B.P."/>
            <person name="Bhandari D."/>
            <person name="Bolshakov S."/>
            <person name="Borkova D."/>
            <person name="Botchan M.R."/>
            <person name="Bouck J."/>
            <person name="Brokstein P."/>
            <person name="Brottier P."/>
            <person name="Burtis K.C."/>
            <person name="Busam D.A."/>
            <person name="Butler H."/>
            <person name="Cadieu E."/>
            <person name="Center A."/>
            <person name="Chandra I."/>
            <person name="Cherry J.M."/>
            <person name="Cawley S."/>
            <person name="Dahlke C."/>
            <person name="Davenport L.B."/>
            <person name="Davies P."/>
            <person name="de Pablos B."/>
            <person name="Delcher A."/>
            <person name="Deng Z."/>
            <person name="Mays A.D."/>
            <person name="Dew I."/>
            <person name="Dietz S.M."/>
            <person name="Dodson K."/>
            <person name="Doup L.E."/>
            <person name="Downes M."/>
            <person name="Dugan-Rocha S."/>
            <person name="Dunkov B.C."/>
            <person name="Dunn P."/>
            <person name="Durbin K.J."/>
            <person name="Evangelista C.C."/>
            <person name="Ferraz C."/>
            <person name="Ferriera S."/>
            <person name="Fleischmann W."/>
            <person name="Fosler C."/>
            <person name="Gabrielian A.E."/>
            <person name="Garg N.S."/>
            <person name="Gelbart W.M."/>
            <person name="Glasser K."/>
            <person name="Glodek A."/>
            <person name="Gong F."/>
            <person name="Gorrell J.H."/>
            <person name="Gu Z."/>
            <person name="Guan P."/>
            <person name="Harris M."/>
            <person name="Harris N.L."/>
            <person name="Harvey D.A."/>
            <person name="Heiman T.J."/>
            <person name="Hernandez J.R."/>
            <person name="Houck J."/>
            <person name="Hostin D."/>
            <person name="Houston K.A."/>
            <person name="Howland T.J."/>
            <person name="Wei M.-H."/>
            <person name="Ibegwam C."/>
            <person name="Jalali M."/>
            <person name="Kalush F."/>
            <person name="Karpen G.H."/>
            <person name="Ke Z."/>
            <person name="Kennison J.A."/>
            <person name="Ketchum K.A."/>
            <person name="Kimmel B.E."/>
            <person name="Kodira C.D."/>
            <person name="Kraft C.L."/>
            <person name="Kravitz S."/>
            <person name="Kulp D."/>
            <person name="Lai Z."/>
            <person name="Lasko P."/>
            <person name="Lei Y."/>
            <person name="Levitsky A.A."/>
            <person name="Li J.H."/>
            <person name="Li Z."/>
            <person name="Liang Y."/>
            <person name="Lin X."/>
            <person name="Liu X."/>
            <person name="Mattei B."/>
            <person name="McIntosh T.C."/>
            <person name="McLeod M.P."/>
            <person name="McPherson D."/>
            <person name="Merkulov G."/>
            <person name="Milshina N.V."/>
            <person name="Mobarry C."/>
            <person name="Morris J."/>
            <person name="Moshrefi A."/>
            <person name="Mount S.M."/>
            <person name="Moy M."/>
            <person name="Murphy B."/>
            <person name="Murphy L."/>
            <person name="Muzny D.M."/>
            <person name="Nelson D.L."/>
            <person name="Nelson D.R."/>
            <person name="Nelson K.A."/>
            <person name="Nixon K."/>
            <person name="Nusskern D.R."/>
            <person name="Pacleb J.M."/>
            <person name="Palazzolo M."/>
            <person name="Pittman G.S."/>
            <person name="Pan S."/>
            <person name="Pollard J."/>
            <person name="Puri V."/>
            <person name="Reese M.G."/>
            <person name="Reinert K."/>
            <person name="Remington K."/>
            <person name="Saunders R.D.C."/>
            <person name="Scheeler F."/>
            <person name="Shen H."/>
            <person name="Shue B.C."/>
            <person name="Siden-Kiamos I."/>
            <person name="Simpson M."/>
            <person name="Skupski M.P."/>
            <person name="Smith T.J."/>
            <person name="Spier E."/>
            <person name="Spradling A.C."/>
            <person name="Stapleton M."/>
            <person name="Strong R."/>
            <person name="Sun E."/>
            <person name="Svirskas R."/>
            <person name="Tector C."/>
            <person name="Turner R."/>
            <person name="Venter E."/>
            <person name="Wang A.H."/>
            <person name="Wang X."/>
            <person name="Wang Z.-Y."/>
            <person name="Wassarman D.A."/>
            <person name="Weinstock G.M."/>
            <person name="Weissenbach J."/>
            <person name="Williams S.M."/>
            <person name="Woodage T."/>
            <person name="Worley K.C."/>
            <person name="Wu D."/>
            <person name="Yang S."/>
            <person name="Yao Q.A."/>
            <person name="Ye J."/>
            <person name="Yeh R.-F."/>
            <person name="Zaveri J.S."/>
            <person name="Zhan M."/>
            <person name="Zhang G."/>
            <person name="Zhao Q."/>
            <person name="Zheng L."/>
            <person name="Zheng X.H."/>
            <person name="Zhong F.N."/>
            <person name="Zhong W."/>
            <person name="Zhou X."/>
            <person name="Zhu S.C."/>
            <person name="Zhu X."/>
            <person name="Smith H.O."/>
            <person name="Gibbs R.A."/>
            <person name="Myers E.W."/>
            <person name="Rubin G.M."/>
            <person name="Venter J.C."/>
        </authorList>
    </citation>
    <scope>NUCLEOTIDE SEQUENCE [LARGE SCALE GENOMIC DNA]</scope>
    <source>
        <strain>Berkeley</strain>
    </source>
</reference>
<reference key="2">
    <citation type="journal article" date="2002" name="Genome Biol.">
        <title>Annotation of the Drosophila melanogaster euchromatic genome: a systematic review.</title>
        <authorList>
            <person name="Misra S."/>
            <person name="Crosby M.A."/>
            <person name="Mungall C.J."/>
            <person name="Matthews B.B."/>
            <person name="Campbell K.S."/>
            <person name="Hradecky P."/>
            <person name="Huang Y."/>
            <person name="Kaminker J.S."/>
            <person name="Millburn G.H."/>
            <person name="Prochnik S.E."/>
            <person name="Smith C.D."/>
            <person name="Tupy J.L."/>
            <person name="Whitfield E.J."/>
            <person name="Bayraktaroglu L."/>
            <person name="Berman B.P."/>
            <person name="Bettencourt B.R."/>
            <person name="Celniker S.E."/>
            <person name="de Grey A.D.N.J."/>
            <person name="Drysdale R.A."/>
            <person name="Harris N.L."/>
            <person name="Richter J."/>
            <person name="Russo S."/>
            <person name="Schroeder A.J."/>
            <person name="Shu S.Q."/>
            <person name="Stapleton M."/>
            <person name="Yamada C."/>
            <person name="Ashburner M."/>
            <person name="Gelbart W.M."/>
            <person name="Rubin G.M."/>
            <person name="Lewis S.E."/>
        </authorList>
    </citation>
    <scope>GENOME REANNOTATION</scope>
    <source>
        <strain>Berkeley</strain>
    </source>
</reference>
<reference key="3">
    <citation type="submission" date="2009-04" db="EMBL/GenBank/DDBJ databases">
        <authorList>
            <person name="Carlson J.W."/>
            <person name="Booth B."/>
            <person name="Frise E."/>
            <person name="Sandler J."/>
            <person name="Wan K.H."/>
            <person name="Yu C."/>
            <person name="Celniker S.E."/>
        </authorList>
    </citation>
    <scope>NUCLEOTIDE SEQUENCE [LARGE SCALE MRNA]</scope>
    <source>
        <strain>Berkeley</strain>
    </source>
</reference>
<reference key="4">
    <citation type="journal article" date="2002" name="Genome Biol.">
        <title>A Drosophila full-length cDNA resource.</title>
        <authorList>
            <person name="Stapleton M."/>
            <person name="Carlson J.W."/>
            <person name="Brokstein P."/>
            <person name="Yu C."/>
            <person name="Champe M."/>
            <person name="George R.A."/>
            <person name="Guarin H."/>
            <person name="Kronmiller B."/>
            <person name="Pacleb J.M."/>
            <person name="Park S."/>
            <person name="Wan K.H."/>
            <person name="Rubin G.M."/>
            <person name="Celniker S.E."/>
        </authorList>
    </citation>
    <scope>NUCLEOTIDE SEQUENCE [LARGE SCALE MRNA] OF 216-952</scope>
    <source>
        <strain>Berkeley</strain>
        <tissue>Embryo</tissue>
    </source>
</reference>
<organism>
    <name type="scientific">Drosophila melanogaster</name>
    <name type="common">Fruit fly</name>
    <dbReference type="NCBI Taxonomy" id="7227"/>
    <lineage>
        <taxon>Eukaryota</taxon>
        <taxon>Metazoa</taxon>
        <taxon>Ecdysozoa</taxon>
        <taxon>Arthropoda</taxon>
        <taxon>Hexapoda</taxon>
        <taxon>Insecta</taxon>
        <taxon>Pterygota</taxon>
        <taxon>Neoptera</taxon>
        <taxon>Endopterygota</taxon>
        <taxon>Diptera</taxon>
        <taxon>Brachycera</taxon>
        <taxon>Muscomorpha</taxon>
        <taxon>Ephydroidea</taxon>
        <taxon>Drosophilidae</taxon>
        <taxon>Drosophila</taxon>
        <taxon>Sophophora</taxon>
    </lineage>
</organism>
<accession>Q9VUA0</accession>
<accession>C1C3H2</accession>
<accession>Q95RM7</accession>
<evidence type="ECO:0000255" key="1">
    <source>
        <dbReference type="PROSITE-ProRule" id="PRU00092"/>
    </source>
</evidence>
<evidence type="ECO:0000256" key="2">
    <source>
        <dbReference type="SAM" id="MobiDB-lite"/>
    </source>
</evidence>
<evidence type="ECO:0000305" key="3"/>
<proteinExistence type="evidence at transcript level"/>
<keyword id="KW-1185">Reference proteome</keyword>
<dbReference type="EMBL" id="AE014296">
    <property type="protein sequence ID" value="AAF49789.1"/>
    <property type="molecule type" value="Genomic_DNA"/>
</dbReference>
<dbReference type="EMBL" id="BT081401">
    <property type="protein sequence ID" value="ACO51532.1"/>
    <property type="molecule type" value="mRNA"/>
</dbReference>
<dbReference type="EMBL" id="AY061272">
    <property type="protein sequence ID" value="AAL28820.1"/>
    <property type="status" value="ALT_INIT"/>
    <property type="molecule type" value="mRNA"/>
</dbReference>
<dbReference type="RefSeq" id="NP_648669.1">
    <property type="nucleotide sequence ID" value="NM_140412.2"/>
</dbReference>
<dbReference type="BioGRID" id="64876">
    <property type="interactions" value="4"/>
</dbReference>
<dbReference type="FunCoup" id="Q9VUA0">
    <property type="interactions" value="2148"/>
</dbReference>
<dbReference type="IntAct" id="Q9VUA0">
    <property type="interactions" value="10"/>
</dbReference>
<dbReference type="STRING" id="7227.FBpp0075534"/>
<dbReference type="PaxDb" id="7227-FBpp0075534"/>
<dbReference type="EnsemblMetazoa" id="FBtr0075792">
    <property type="protein sequence ID" value="FBpp0075534"/>
    <property type="gene ID" value="FBgn0036386"/>
</dbReference>
<dbReference type="GeneID" id="39535"/>
<dbReference type="KEGG" id="dme:Dmel_CG8833"/>
<dbReference type="UCSC" id="CG8833-RA">
    <property type="organism name" value="d. melanogaster"/>
</dbReference>
<dbReference type="AGR" id="FB:FBgn0036386"/>
<dbReference type="FlyBase" id="FBgn0036386">
    <property type="gene designation" value="CG8833"/>
</dbReference>
<dbReference type="VEuPathDB" id="VectorBase:FBgn0036386"/>
<dbReference type="eggNOG" id="KOG2138">
    <property type="taxonomic scope" value="Eukaryota"/>
</dbReference>
<dbReference type="GeneTree" id="ENSGT00390000007074"/>
<dbReference type="HOGENOM" id="CLU_008613_1_0_1"/>
<dbReference type="InParanoid" id="Q9VUA0"/>
<dbReference type="OMA" id="QLWQQHA"/>
<dbReference type="OrthoDB" id="20507at2759"/>
<dbReference type="PhylomeDB" id="Q9VUA0"/>
<dbReference type="Reactome" id="R-DME-72163">
    <property type="pathway name" value="mRNA Splicing - Major Pathway"/>
</dbReference>
<dbReference type="BioGRID-ORCS" id="39535">
    <property type="hits" value="1 hit in 1 CRISPR screen"/>
</dbReference>
<dbReference type="GenomeRNAi" id="39535"/>
<dbReference type="PRO" id="PR:Q9VUA0"/>
<dbReference type="Proteomes" id="UP000000803">
    <property type="component" value="Chromosome 3L"/>
</dbReference>
<dbReference type="Bgee" id="FBgn0036386">
    <property type="expression patterns" value="Expressed in ocellus retinula cell (Drosophila) in insect head and 92 other cell types or tissues"/>
</dbReference>
<dbReference type="GO" id="GO:0071013">
    <property type="term" value="C:catalytic step 2 spliceosome"/>
    <property type="evidence" value="ECO:0007005"/>
    <property type="project" value="FlyBase"/>
</dbReference>
<dbReference type="GO" id="GO:0005634">
    <property type="term" value="C:nucleus"/>
    <property type="evidence" value="ECO:0000318"/>
    <property type="project" value="GO_Central"/>
</dbReference>
<dbReference type="GO" id="GO:0071011">
    <property type="term" value="C:precatalytic spliceosome"/>
    <property type="evidence" value="ECO:0007005"/>
    <property type="project" value="FlyBase"/>
</dbReference>
<dbReference type="GO" id="GO:0003723">
    <property type="term" value="F:RNA binding"/>
    <property type="evidence" value="ECO:0000318"/>
    <property type="project" value="GO_Central"/>
</dbReference>
<dbReference type="GO" id="GO:0000398">
    <property type="term" value="P:mRNA splicing, via spliceosome"/>
    <property type="evidence" value="ECO:0000305"/>
    <property type="project" value="FlyBase"/>
</dbReference>
<dbReference type="InterPro" id="IPR011666">
    <property type="entry name" value="DUF1604"/>
</dbReference>
<dbReference type="InterPro" id="IPR000467">
    <property type="entry name" value="G_patch_dom"/>
</dbReference>
<dbReference type="PANTHER" id="PTHR13384">
    <property type="entry name" value="G PATCH DOMAIN-CONTAINING PROTEIN 1"/>
    <property type="match status" value="1"/>
</dbReference>
<dbReference type="PANTHER" id="PTHR13384:SF19">
    <property type="entry name" value="G PATCH DOMAIN-CONTAINING PROTEIN 1"/>
    <property type="match status" value="1"/>
</dbReference>
<dbReference type="Pfam" id="PF07713">
    <property type="entry name" value="DUF1604"/>
    <property type="match status" value="1"/>
</dbReference>
<dbReference type="Pfam" id="PF01585">
    <property type="entry name" value="G-patch"/>
    <property type="match status" value="1"/>
</dbReference>
<dbReference type="PROSITE" id="PS50174">
    <property type="entry name" value="G_PATCH"/>
    <property type="match status" value="1"/>
</dbReference>
<gene>
    <name type="ORF">CG8833</name>
</gene>
<protein>
    <recommendedName>
        <fullName>G patch domain-containing protein 1 homolog</fullName>
    </recommendedName>
</protein>
<feature type="chain" id="PRO_0000287460" description="G patch domain-containing protein 1 homolog">
    <location>
        <begin position="1"/>
        <end position="952"/>
    </location>
</feature>
<feature type="domain" description="G-patch" evidence="1">
    <location>
        <begin position="153"/>
        <end position="199"/>
    </location>
</feature>
<feature type="region of interest" description="Disordered" evidence="2">
    <location>
        <begin position="104"/>
        <end position="127"/>
    </location>
</feature>
<feature type="region of interest" description="Disordered" evidence="2">
    <location>
        <begin position="165"/>
        <end position="233"/>
    </location>
</feature>
<feature type="region of interest" description="Disordered" evidence="2">
    <location>
        <begin position="320"/>
        <end position="345"/>
    </location>
</feature>
<feature type="region of interest" description="Disordered" evidence="2">
    <location>
        <begin position="370"/>
        <end position="432"/>
    </location>
</feature>
<feature type="region of interest" description="Disordered" evidence="2">
    <location>
        <begin position="660"/>
        <end position="711"/>
    </location>
</feature>
<feature type="region of interest" description="Disordered" evidence="2">
    <location>
        <begin position="822"/>
        <end position="952"/>
    </location>
</feature>
<feature type="compositionally biased region" description="Basic and acidic residues" evidence="2">
    <location>
        <begin position="107"/>
        <end position="123"/>
    </location>
</feature>
<feature type="compositionally biased region" description="Acidic residues" evidence="2">
    <location>
        <begin position="214"/>
        <end position="233"/>
    </location>
</feature>
<feature type="compositionally biased region" description="Basic residues" evidence="2">
    <location>
        <begin position="323"/>
        <end position="333"/>
    </location>
</feature>
<feature type="compositionally biased region" description="Basic and acidic residues" evidence="2">
    <location>
        <begin position="375"/>
        <end position="402"/>
    </location>
</feature>
<feature type="compositionally biased region" description="Basic and acidic residues" evidence="2">
    <location>
        <begin position="414"/>
        <end position="432"/>
    </location>
</feature>
<feature type="compositionally biased region" description="Basic and acidic residues" evidence="2">
    <location>
        <begin position="679"/>
        <end position="691"/>
    </location>
</feature>
<feature type="compositionally biased region" description="Low complexity" evidence="2">
    <location>
        <begin position="886"/>
        <end position="896"/>
    </location>
</feature>
<feature type="compositionally biased region" description="Basic residues" evidence="2">
    <location>
        <begin position="906"/>
        <end position="934"/>
    </location>
</feature>
<feature type="compositionally biased region" description="Basic residues" evidence="2">
    <location>
        <begin position="941"/>
        <end position="952"/>
    </location>
</feature>
<name>GPTC1_DROME</name>
<sequence length="952" mass="107899">MDEEEHLHRFGTPLPALQKDVVPAKKPVAIEDQIVKDENGKRRFHGAFTGGFSAGFWNTVGSLEGWTPQTFKSSRGERASSKAQLKPEDFMDQEDLGEFGIAPQGIRTRDEFANEDEQKQRSDQRRRKLMQPELGVGAIPGLPVLEQLLRPVRDKVAVRILKSMGWKPGQGVGPRQTRKEKRQATARNSKEQYLMEHYGAEGLPSNKENKGEEDSNNEDEDDEDITFAPDDYEPIFYTPKENRFGMSYSGLNRDPILSKSSSSSAKPMQHINLFGEMEAQANKKQLSIRGQAFGVGAFEEEDEDIYARDDMTRYDFSLADKKPKQKKQQHVQQRHVIDGFSEDNSPAVLQRPYAIDLPRDFQPRNWLQRRSRFAPMDKERAQKLETASEYKRSGLGRHDLNPDQRAQILGEQQQEEKTAEEQPKRNPFKDHSKSLMERINARTEGFTKGGVITENGEEQQTELAKEVKEANAAIQERAALKTKDLPSAMNSSSAFKPFIADEAKQLRYEKFVSSKLTDDKEITEFLARMQPVTLSLWDREMEKKEFIQAAKIYRPLVGLMNDRFVSEANVQAEKVEQQEKPPEERKIVMERTKTMWKPTALLCKRYNIAEPFGGAMLEPEKELKAKAKISVFDYLETSVNTKANFETPSIFPKHIEKSIPEKVETPPSPPPAPQPEAEIQDKPNTKEEPSKHTFVPKTPLEQAVDESRNKPISEKVDLFKSIFEDSDEEETELSEQDKLAILQESFGLPVTSTTSAAAQNVLRNTSPPRGIFASLFSPKIKDAAKEPAPTKFGPIEGSKLKIAYKPRKERLRNDRELAMAEVAPEDIYGPKLPTAPPQKPAAPEIQAEANIDDRLQQLWQQHAPKKRKAEKWVEKKCISGSEDSDASSSNESSSSDSSDDNDKRSKLSKPKKSHKGSSSKKSKKSKLKSKKKSKKSEESKHKAKKKKKKSKH</sequence>